<comment type="function">
    <text evidence="1">Catalyzes the formation of S-adenosylmethionine (AdoMet) from methionine and ATP. The overall synthetic reaction is composed of two sequential steps, AdoMet formation and the subsequent tripolyphosphate hydrolysis which occurs prior to release of AdoMet from the enzyme.</text>
</comment>
<comment type="catalytic activity">
    <reaction evidence="1">
        <text>L-methionine + ATP + H2O = S-adenosyl-L-methionine + phosphate + diphosphate</text>
        <dbReference type="Rhea" id="RHEA:21080"/>
        <dbReference type="ChEBI" id="CHEBI:15377"/>
        <dbReference type="ChEBI" id="CHEBI:30616"/>
        <dbReference type="ChEBI" id="CHEBI:33019"/>
        <dbReference type="ChEBI" id="CHEBI:43474"/>
        <dbReference type="ChEBI" id="CHEBI:57844"/>
        <dbReference type="ChEBI" id="CHEBI:59789"/>
        <dbReference type="EC" id="2.5.1.6"/>
    </reaction>
</comment>
<comment type="cofactor">
    <cofactor evidence="1">
        <name>Mg(2+)</name>
        <dbReference type="ChEBI" id="CHEBI:18420"/>
    </cofactor>
    <text evidence="1">Binds 2 divalent ions per subunit.</text>
</comment>
<comment type="cofactor">
    <cofactor evidence="1">
        <name>K(+)</name>
        <dbReference type="ChEBI" id="CHEBI:29103"/>
    </cofactor>
    <text evidence="1">Binds 1 potassium ion per subunit.</text>
</comment>
<comment type="pathway">
    <text evidence="1">Amino-acid biosynthesis; S-adenosyl-L-methionine biosynthesis; S-adenosyl-L-methionine from L-methionine: step 1/1.</text>
</comment>
<comment type="subunit">
    <text evidence="1">Homotetramer; dimer of dimers.</text>
</comment>
<comment type="subcellular location">
    <subcellularLocation>
        <location evidence="1">Cytoplasm</location>
    </subcellularLocation>
</comment>
<comment type="similarity">
    <text evidence="1">Belongs to the AdoMet synthase family.</text>
</comment>
<protein>
    <recommendedName>
        <fullName evidence="1">S-adenosylmethionine synthase</fullName>
        <shortName evidence="1">AdoMet synthase</shortName>
        <ecNumber evidence="1">2.5.1.6</ecNumber>
    </recommendedName>
    <alternativeName>
        <fullName evidence="1">MAT</fullName>
    </alternativeName>
    <alternativeName>
        <fullName evidence="1">Methionine adenosyltransferase</fullName>
    </alternativeName>
</protein>
<reference key="1">
    <citation type="journal article" date="2010" name="PLoS ONE">
        <title>The complete genome sequence of Cupriavidus metallidurans strain CH34, a master survivalist in harsh and anthropogenic environments.</title>
        <authorList>
            <person name="Janssen P.J."/>
            <person name="Van Houdt R."/>
            <person name="Moors H."/>
            <person name="Monsieurs P."/>
            <person name="Morin N."/>
            <person name="Michaux A."/>
            <person name="Benotmane M.A."/>
            <person name="Leys N."/>
            <person name="Vallaeys T."/>
            <person name="Lapidus A."/>
            <person name="Monchy S."/>
            <person name="Medigue C."/>
            <person name="Taghavi S."/>
            <person name="McCorkle S."/>
            <person name="Dunn J."/>
            <person name="van der Lelie D."/>
            <person name="Mergeay M."/>
        </authorList>
    </citation>
    <scope>NUCLEOTIDE SEQUENCE [LARGE SCALE GENOMIC DNA]</scope>
    <source>
        <strain>ATCC 43123 / DSM 2839 / NBRC 102507 / CH34</strain>
    </source>
</reference>
<proteinExistence type="inferred from homology"/>
<keyword id="KW-0067">ATP-binding</keyword>
<keyword id="KW-0963">Cytoplasm</keyword>
<keyword id="KW-0460">Magnesium</keyword>
<keyword id="KW-0479">Metal-binding</keyword>
<keyword id="KW-0547">Nucleotide-binding</keyword>
<keyword id="KW-0554">One-carbon metabolism</keyword>
<keyword id="KW-0630">Potassium</keyword>
<keyword id="KW-1185">Reference proteome</keyword>
<keyword id="KW-0808">Transferase</keyword>
<organism>
    <name type="scientific">Cupriavidus metallidurans (strain ATCC 43123 / DSM 2839 / NBRC 102507 / CH34)</name>
    <name type="common">Ralstonia metallidurans</name>
    <dbReference type="NCBI Taxonomy" id="266264"/>
    <lineage>
        <taxon>Bacteria</taxon>
        <taxon>Pseudomonadati</taxon>
        <taxon>Pseudomonadota</taxon>
        <taxon>Betaproteobacteria</taxon>
        <taxon>Burkholderiales</taxon>
        <taxon>Burkholderiaceae</taxon>
        <taxon>Cupriavidus</taxon>
    </lineage>
</organism>
<evidence type="ECO:0000255" key="1">
    <source>
        <dbReference type="HAMAP-Rule" id="MF_00086"/>
    </source>
</evidence>
<sequence>MSNDFLFTSESVSEGHPDKVADQISDAVLDAILAQDKYARVAAETLCNTGLVVLAGEITTTANVDYIQVARETIKRIGYDNTEYGIDYKGCAVLVAYDKQSPDIAQGVDRASDDYLNQGAGDQGLMFGYACDETPELMPFPIYYSHRLVERQSLLRRDGRLPWLRPDAKSQVTVRYVDGRPHSVDTVVLSTQHAPDISQAQIREAVIEEIIKPVLPAEMLKETKYLVNPTGRFVIGGPQGDCGLTGRKIIVDTYGGASPHGGGAFSGKDPSKVDRSAAYAARYVAKNVVAAGLARQCQVQVSYAIGVARPINVTVYTEGTGKISDEKIAALVQEHFDLRPKGIVQMLDLLRPIYEKTAAYGHFGREEPEFSWEATDKAAILRAAAGL</sequence>
<name>METK_CUPMC</name>
<accession>Q1LS34</accession>
<feature type="chain" id="PRO_0000302969" description="S-adenosylmethionine synthase">
    <location>
        <begin position="1"/>
        <end position="387"/>
    </location>
</feature>
<feature type="region of interest" description="Flexible loop" evidence="1">
    <location>
        <begin position="100"/>
        <end position="110"/>
    </location>
</feature>
<feature type="binding site" description="in other chain" evidence="1">
    <location>
        <position position="16"/>
    </location>
    <ligand>
        <name>ATP</name>
        <dbReference type="ChEBI" id="CHEBI:30616"/>
        <note>ligand shared between two neighboring subunits</note>
    </ligand>
</feature>
<feature type="binding site" evidence="1">
    <location>
        <position position="18"/>
    </location>
    <ligand>
        <name>Mg(2+)</name>
        <dbReference type="ChEBI" id="CHEBI:18420"/>
    </ligand>
</feature>
<feature type="binding site" evidence="1">
    <location>
        <position position="44"/>
    </location>
    <ligand>
        <name>K(+)</name>
        <dbReference type="ChEBI" id="CHEBI:29103"/>
    </ligand>
</feature>
<feature type="binding site" description="in other chain" evidence="1">
    <location>
        <position position="57"/>
    </location>
    <ligand>
        <name>L-methionine</name>
        <dbReference type="ChEBI" id="CHEBI:57844"/>
        <note>ligand shared between two neighboring subunits</note>
    </ligand>
</feature>
<feature type="binding site" description="in other chain" evidence="1">
    <location>
        <position position="100"/>
    </location>
    <ligand>
        <name>L-methionine</name>
        <dbReference type="ChEBI" id="CHEBI:57844"/>
        <note>ligand shared between two neighboring subunits</note>
    </ligand>
</feature>
<feature type="binding site" description="in other chain" evidence="1">
    <location>
        <begin position="167"/>
        <end position="169"/>
    </location>
    <ligand>
        <name>ATP</name>
        <dbReference type="ChEBI" id="CHEBI:30616"/>
        <note>ligand shared between two neighboring subunits</note>
    </ligand>
</feature>
<feature type="binding site" description="in other chain" evidence="1">
    <location>
        <begin position="232"/>
        <end position="233"/>
    </location>
    <ligand>
        <name>ATP</name>
        <dbReference type="ChEBI" id="CHEBI:30616"/>
        <note>ligand shared between two neighboring subunits</note>
    </ligand>
</feature>
<feature type="binding site" evidence="1">
    <location>
        <position position="241"/>
    </location>
    <ligand>
        <name>ATP</name>
        <dbReference type="ChEBI" id="CHEBI:30616"/>
        <note>ligand shared between two neighboring subunits</note>
    </ligand>
</feature>
<feature type="binding site" evidence="1">
    <location>
        <position position="241"/>
    </location>
    <ligand>
        <name>L-methionine</name>
        <dbReference type="ChEBI" id="CHEBI:57844"/>
        <note>ligand shared between two neighboring subunits</note>
    </ligand>
</feature>
<feature type="binding site" description="in other chain" evidence="1">
    <location>
        <begin position="247"/>
        <end position="248"/>
    </location>
    <ligand>
        <name>ATP</name>
        <dbReference type="ChEBI" id="CHEBI:30616"/>
        <note>ligand shared between two neighboring subunits</note>
    </ligand>
</feature>
<feature type="binding site" evidence="1">
    <location>
        <position position="264"/>
    </location>
    <ligand>
        <name>ATP</name>
        <dbReference type="ChEBI" id="CHEBI:30616"/>
        <note>ligand shared between two neighboring subunits</note>
    </ligand>
</feature>
<feature type="binding site" evidence="1">
    <location>
        <position position="268"/>
    </location>
    <ligand>
        <name>ATP</name>
        <dbReference type="ChEBI" id="CHEBI:30616"/>
        <note>ligand shared between two neighboring subunits</note>
    </ligand>
</feature>
<feature type="binding site" description="in other chain" evidence="1">
    <location>
        <position position="272"/>
    </location>
    <ligand>
        <name>L-methionine</name>
        <dbReference type="ChEBI" id="CHEBI:57844"/>
        <note>ligand shared between two neighboring subunits</note>
    </ligand>
</feature>
<dbReference type="EC" id="2.5.1.6" evidence="1"/>
<dbReference type="EMBL" id="CP000352">
    <property type="protein sequence ID" value="ABF07042.1"/>
    <property type="molecule type" value="Genomic_DNA"/>
</dbReference>
<dbReference type="RefSeq" id="WP_008648556.1">
    <property type="nucleotide sequence ID" value="NC_007973.1"/>
</dbReference>
<dbReference type="SMR" id="Q1LS34"/>
<dbReference type="STRING" id="266264.Rmet_0156"/>
<dbReference type="GeneID" id="60822879"/>
<dbReference type="KEGG" id="rme:Rmet_0156"/>
<dbReference type="eggNOG" id="COG0192">
    <property type="taxonomic scope" value="Bacteria"/>
</dbReference>
<dbReference type="HOGENOM" id="CLU_041802_1_1_4"/>
<dbReference type="UniPathway" id="UPA00315">
    <property type="reaction ID" value="UER00080"/>
</dbReference>
<dbReference type="Proteomes" id="UP000002429">
    <property type="component" value="Chromosome"/>
</dbReference>
<dbReference type="GO" id="GO:0005737">
    <property type="term" value="C:cytoplasm"/>
    <property type="evidence" value="ECO:0007669"/>
    <property type="project" value="UniProtKB-SubCell"/>
</dbReference>
<dbReference type="GO" id="GO:0005524">
    <property type="term" value="F:ATP binding"/>
    <property type="evidence" value="ECO:0007669"/>
    <property type="project" value="UniProtKB-UniRule"/>
</dbReference>
<dbReference type="GO" id="GO:0000287">
    <property type="term" value="F:magnesium ion binding"/>
    <property type="evidence" value="ECO:0007669"/>
    <property type="project" value="UniProtKB-UniRule"/>
</dbReference>
<dbReference type="GO" id="GO:0004478">
    <property type="term" value="F:methionine adenosyltransferase activity"/>
    <property type="evidence" value="ECO:0007669"/>
    <property type="project" value="UniProtKB-UniRule"/>
</dbReference>
<dbReference type="GO" id="GO:0006730">
    <property type="term" value="P:one-carbon metabolic process"/>
    <property type="evidence" value="ECO:0007669"/>
    <property type="project" value="UniProtKB-KW"/>
</dbReference>
<dbReference type="GO" id="GO:0006556">
    <property type="term" value="P:S-adenosylmethionine biosynthetic process"/>
    <property type="evidence" value="ECO:0007669"/>
    <property type="project" value="UniProtKB-UniRule"/>
</dbReference>
<dbReference type="CDD" id="cd18079">
    <property type="entry name" value="S-AdoMet_synt"/>
    <property type="match status" value="1"/>
</dbReference>
<dbReference type="FunFam" id="3.30.300.10:FF:000003">
    <property type="entry name" value="S-adenosylmethionine synthase"/>
    <property type="match status" value="1"/>
</dbReference>
<dbReference type="FunFam" id="3.30.300.10:FF:000004">
    <property type="entry name" value="S-adenosylmethionine synthase"/>
    <property type="match status" value="1"/>
</dbReference>
<dbReference type="Gene3D" id="3.30.300.10">
    <property type="match status" value="3"/>
</dbReference>
<dbReference type="HAMAP" id="MF_00086">
    <property type="entry name" value="S_AdoMet_synth1"/>
    <property type="match status" value="1"/>
</dbReference>
<dbReference type="InterPro" id="IPR022631">
    <property type="entry name" value="ADOMET_SYNTHASE_CS"/>
</dbReference>
<dbReference type="InterPro" id="IPR022630">
    <property type="entry name" value="S-AdoMet_synt_C"/>
</dbReference>
<dbReference type="InterPro" id="IPR022629">
    <property type="entry name" value="S-AdoMet_synt_central"/>
</dbReference>
<dbReference type="InterPro" id="IPR022628">
    <property type="entry name" value="S-AdoMet_synt_N"/>
</dbReference>
<dbReference type="InterPro" id="IPR002133">
    <property type="entry name" value="S-AdoMet_synthetase"/>
</dbReference>
<dbReference type="InterPro" id="IPR022636">
    <property type="entry name" value="S-AdoMet_synthetase_sfam"/>
</dbReference>
<dbReference type="NCBIfam" id="TIGR01034">
    <property type="entry name" value="metK"/>
    <property type="match status" value="1"/>
</dbReference>
<dbReference type="PANTHER" id="PTHR11964">
    <property type="entry name" value="S-ADENOSYLMETHIONINE SYNTHETASE"/>
    <property type="match status" value="1"/>
</dbReference>
<dbReference type="Pfam" id="PF02773">
    <property type="entry name" value="S-AdoMet_synt_C"/>
    <property type="match status" value="1"/>
</dbReference>
<dbReference type="Pfam" id="PF02772">
    <property type="entry name" value="S-AdoMet_synt_M"/>
    <property type="match status" value="1"/>
</dbReference>
<dbReference type="Pfam" id="PF00438">
    <property type="entry name" value="S-AdoMet_synt_N"/>
    <property type="match status" value="1"/>
</dbReference>
<dbReference type="PIRSF" id="PIRSF000497">
    <property type="entry name" value="MAT"/>
    <property type="match status" value="1"/>
</dbReference>
<dbReference type="SUPFAM" id="SSF55973">
    <property type="entry name" value="S-adenosylmethionine synthetase"/>
    <property type="match status" value="3"/>
</dbReference>
<dbReference type="PROSITE" id="PS00376">
    <property type="entry name" value="ADOMET_SYNTHASE_1"/>
    <property type="match status" value="1"/>
</dbReference>
<dbReference type="PROSITE" id="PS00377">
    <property type="entry name" value="ADOMET_SYNTHASE_2"/>
    <property type="match status" value="1"/>
</dbReference>
<gene>
    <name evidence="1" type="primary">metK</name>
    <name type="ordered locus">Rmet_0156</name>
</gene>